<keyword id="KW-0150">Chloroplast</keyword>
<keyword id="KW-0934">Plastid</keyword>
<feature type="chain" id="PRO_0000217446" description="Uncharacterized 7.8 kDa protein">
    <location>
        <begin position="1"/>
        <end position="62"/>
    </location>
</feature>
<protein>
    <recommendedName>
        <fullName>Uncharacterized 7.8 kDa protein</fullName>
    </recommendedName>
    <alternativeName>
        <fullName>ORF62</fullName>
    </alternativeName>
</protein>
<proteinExistence type="predicted"/>
<dbReference type="EMBL" id="AF041468">
    <property type="protein sequence ID" value="AAC35650.1"/>
    <property type="molecule type" value="Genomic_DNA"/>
</dbReference>
<dbReference type="RefSeq" id="NP_050716.1">
    <property type="nucleotide sequence ID" value="NC_000926.1"/>
</dbReference>
<dbReference type="GeneID" id="1444461"/>
<dbReference type="HOGENOM" id="CLU_2911228_0_0_1"/>
<dbReference type="GO" id="GO:0009507">
    <property type="term" value="C:chloroplast"/>
    <property type="evidence" value="ECO:0007669"/>
    <property type="project" value="UniProtKB-SubCell"/>
</dbReference>
<organism>
    <name type="scientific">Guillardia theta</name>
    <name type="common">Cryptophyte</name>
    <name type="synonym">Cryptomonas phi</name>
    <dbReference type="NCBI Taxonomy" id="55529"/>
    <lineage>
        <taxon>Eukaryota</taxon>
        <taxon>Cryptophyceae</taxon>
        <taxon>Pyrenomonadales</taxon>
        <taxon>Geminigeraceae</taxon>
        <taxon>Guillardia</taxon>
    </lineage>
</organism>
<accession>O78459</accession>
<reference key="1">
    <citation type="journal article" date="1999" name="J. Mol. Evol.">
        <title>The plastid genome of the cryptophyte alga, Guillardia theta: complete sequence and conserved synteny groups confirm its common ancestry with red algae.</title>
        <authorList>
            <person name="Douglas S.E."/>
            <person name="Penny S.L."/>
        </authorList>
    </citation>
    <scope>NUCLEOTIDE SEQUENCE [LARGE SCALE GENOMIC DNA]</scope>
</reference>
<comment type="subcellular location">
    <subcellularLocation>
        <location>Plastid</location>
        <location>Chloroplast</location>
    </subcellularLocation>
</comment>
<name>YCX5_GUITH</name>
<sequence length="62" mass="7818">MLKDIQIYELNERIKKKKLKTYNRNKLLKLLTYVERHKICIVLYFNLIKRQLIYIEFVFIRN</sequence>
<geneLocation type="chloroplast"/>